<keyword id="KW-0963">Cytoplasm</keyword>
<keyword id="KW-0808">Transferase</keyword>
<reference key="1">
    <citation type="journal article" date="2001" name="Nature">
        <title>Complete genome sequence of a multiple drug resistant Salmonella enterica serovar Typhi CT18.</title>
        <authorList>
            <person name="Parkhill J."/>
            <person name="Dougan G."/>
            <person name="James K.D."/>
            <person name="Thomson N.R."/>
            <person name="Pickard D."/>
            <person name="Wain J."/>
            <person name="Churcher C.M."/>
            <person name="Mungall K.L."/>
            <person name="Bentley S.D."/>
            <person name="Holden M.T.G."/>
            <person name="Sebaihia M."/>
            <person name="Baker S."/>
            <person name="Basham D."/>
            <person name="Brooks K."/>
            <person name="Chillingworth T."/>
            <person name="Connerton P."/>
            <person name="Cronin A."/>
            <person name="Davis P."/>
            <person name="Davies R.M."/>
            <person name="Dowd L."/>
            <person name="White N."/>
            <person name="Farrar J."/>
            <person name="Feltwell T."/>
            <person name="Hamlin N."/>
            <person name="Haque A."/>
            <person name="Hien T.T."/>
            <person name="Holroyd S."/>
            <person name="Jagels K."/>
            <person name="Krogh A."/>
            <person name="Larsen T.S."/>
            <person name="Leather S."/>
            <person name="Moule S."/>
            <person name="O'Gaora P."/>
            <person name="Parry C."/>
            <person name="Quail M.A."/>
            <person name="Rutherford K.M."/>
            <person name="Simmonds M."/>
            <person name="Skelton J."/>
            <person name="Stevens K."/>
            <person name="Whitehead S."/>
            <person name="Barrell B.G."/>
        </authorList>
    </citation>
    <scope>NUCLEOTIDE SEQUENCE [LARGE SCALE GENOMIC DNA]</scope>
    <source>
        <strain>CT18</strain>
    </source>
</reference>
<reference key="2">
    <citation type="journal article" date="2003" name="J. Bacteriol.">
        <title>Comparative genomics of Salmonella enterica serovar Typhi strains Ty2 and CT18.</title>
        <authorList>
            <person name="Deng W."/>
            <person name="Liou S.-R."/>
            <person name="Plunkett G. III"/>
            <person name="Mayhew G.F."/>
            <person name="Rose D.J."/>
            <person name="Burland V."/>
            <person name="Kodoyianni V."/>
            <person name="Schwartz D.C."/>
            <person name="Blattner F.R."/>
        </authorList>
    </citation>
    <scope>NUCLEOTIDE SEQUENCE [LARGE SCALE GENOMIC DNA]</scope>
    <source>
        <strain>ATCC 700931 / Ty2</strain>
    </source>
</reference>
<evidence type="ECO:0000250" key="1"/>
<evidence type="ECO:0000255" key="2">
    <source>
        <dbReference type="HAMAP-Rule" id="MF_01050"/>
    </source>
</evidence>
<organism>
    <name type="scientific">Salmonella typhi</name>
    <dbReference type="NCBI Taxonomy" id="90370"/>
    <lineage>
        <taxon>Bacteria</taxon>
        <taxon>Pseudomonadati</taxon>
        <taxon>Pseudomonadota</taxon>
        <taxon>Gammaproteobacteria</taxon>
        <taxon>Enterobacterales</taxon>
        <taxon>Enterobacteriaceae</taxon>
        <taxon>Salmonella</taxon>
    </lineage>
</organism>
<name>CAIB_SALTI</name>
<comment type="function">
    <text evidence="1">Catalyzes the reversible transfer of the CoA moiety from gamma-butyrobetainyl-CoA to L-carnitine to generate L-carnitinyl-CoA and gamma-butyrobetaine. Is also able to catalyze the reversible transfer of the CoA moiety from gamma-butyrobetainyl-CoA or L-carnitinyl-CoA to crotonobetaine to generate crotonobetainyl-CoA (By similarity).</text>
</comment>
<comment type="catalytic activity">
    <reaction>
        <text>crotonobetainyl-CoA + (R)-carnitine = crotonobetaine + (R)-carnitinyl-CoA</text>
        <dbReference type="Rhea" id="RHEA:28526"/>
        <dbReference type="ChEBI" id="CHEBI:16347"/>
        <dbReference type="ChEBI" id="CHEBI:17237"/>
        <dbReference type="ChEBI" id="CHEBI:60932"/>
        <dbReference type="ChEBI" id="CHEBI:60933"/>
        <dbReference type="EC" id="2.8.3.21"/>
    </reaction>
</comment>
<comment type="catalytic activity">
    <reaction>
        <text>4-(trimethylamino)butanoyl-CoA + (R)-carnitine = (R)-carnitinyl-CoA + 4-(trimethylamino)butanoate</text>
        <dbReference type="Rhea" id="RHEA:28418"/>
        <dbReference type="ChEBI" id="CHEBI:16244"/>
        <dbReference type="ChEBI" id="CHEBI:16347"/>
        <dbReference type="ChEBI" id="CHEBI:60932"/>
        <dbReference type="ChEBI" id="CHEBI:61513"/>
        <dbReference type="EC" id="2.8.3.21"/>
    </reaction>
</comment>
<comment type="pathway">
    <text>Amine and polyamine metabolism; carnitine metabolism.</text>
</comment>
<comment type="subunit">
    <text evidence="1">Homodimer.</text>
</comment>
<comment type="subcellular location">
    <subcellularLocation>
        <location evidence="1">Cytoplasm</location>
    </subcellularLocation>
</comment>
<comment type="similarity">
    <text evidence="2">Belongs to the CoA-transferase III family. CaiB subfamily.</text>
</comment>
<sequence>MNHLPMPTFGPLAGVRVVFSGIEIAGPFAGQMFAEWGAEVIWIENVAWADTIRVQPNYPQLSRRNLHALSLNIFKDEGREAFLKLMETTDIFIEASKGPAFARRGITDEVLWEHNPKLVIAHLSGFGQYGTEEYTNLPAYNTIAQAFSGYLIQNGDVDQPMPAFPYTADYFSGMTATTAALAALHKVRETGKGESIDIAMYEVMLRMGQYFMMDYFNGGEICPRMTKGKDPYYAGCGLYKCADGYIVMELVGITQINECFKDIGLAHILGTPEVPEGTQLIHRVECPYGPLVEEKLDAWLAAHTIADVQARFAELNIACAKVLTIPELEGNPQYVARESITQWQTMDGRTCKGPNIMPKFKNNPGKIWRGMPSHGMDTAAILKNIGYSEADIKELVGKGLAKVED</sequence>
<protein>
    <recommendedName>
        <fullName>L-carnitine CoA-transferase</fullName>
        <ecNumber>2.8.3.21</ecNumber>
    </recommendedName>
    <alternativeName>
        <fullName>Crotonobetainyl-CoA:carnitine CoA-transferase</fullName>
    </alternativeName>
</protein>
<accession>Q8Z9L3</accession>
<gene>
    <name type="primary">caiB</name>
    <name type="ordered locus">STY0082</name>
    <name type="ordered locus">t0073</name>
</gene>
<proteinExistence type="inferred from homology"/>
<feature type="chain" id="PRO_0000194712" description="L-carnitine CoA-transferase">
    <location>
        <begin position="1"/>
        <end position="405"/>
    </location>
</feature>
<feature type="active site" description="Nucleophile" evidence="1">
    <location>
        <position position="169"/>
    </location>
</feature>
<feature type="binding site" evidence="1">
    <location>
        <position position="97"/>
    </location>
    <ligand>
        <name>CoA</name>
        <dbReference type="ChEBI" id="CHEBI:57287"/>
    </ligand>
</feature>
<feature type="binding site" evidence="1">
    <location>
        <position position="104"/>
    </location>
    <ligand>
        <name>CoA</name>
        <dbReference type="ChEBI" id="CHEBI:57287"/>
    </ligand>
</feature>
<dbReference type="EC" id="2.8.3.21"/>
<dbReference type="EMBL" id="AL513382">
    <property type="protein sequence ID" value="CAD01226.1"/>
    <property type="molecule type" value="Genomic_DNA"/>
</dbReference>
<dbReference type="EMBL" id="AE014613">
    <property type="protein sequence ID" value="AAO67806.1"/>
    <property type="molecule type" value="Genomic_DNA"/>
</dbReference>
<dbReference type="RefSeq" id="NP_454682.1">
    <property type="nucleotide sequence ID" value="NC_003198.1"/>
</dbReference>
<dbReference type="RefSeq" id="WP_001016209.1">
    <property type="nucleotide sequence ID" value="NZ_WSUR01000028.1"/>
</dbReference>
<dbReference type="SMR" id="Q8Z9L3"/>
<dbReference type="STRING" id="220341.gene:17584128"/>
<dbReference type="KEGG" id="stt:t0073"/>
<dbReference type="KEGG" id="sty:STY0082"/>
<dbReference type="PATRIC" id="fig|220341.7.peg.81"/>
<dbReference type="eggNOG" id="COG1804">
    <property type="taxonomic scope" value="Bacteria"/>
</dbReference>
<dbReference type="HOGENOM" id="CLU_033975_2_0_6"/>
<dbReference type="OMA" id="HRPGFGT"/>
<dbReference type="OrthoDB" id="9058532at2"/>
<dbReference type="UniPathway" id="UPA00117"/>
<dbReference type="Proteomes" id="UP000000541">
    <property type="component" value="Chromosome"/>
</dbReference>
<dbReference type="Proteomes" id="UP000002670">
    <property type="component" value="Chromosome"/>
</dbReference>
<dbReference type="GO" id="GO:0005737">
    <property type="term" value="C:cytoplasm"/>
    <property type="evidence" value="ECO:0007669"/>
    <property type="project" value="UniProtKB-SubCell"/>
</dbReference>
<dbReference type="GO" id="GO:0008735">
    <property type="term" value="F:L-carnitine CoA-transferase activity"/>
    <property type="evidence" value="ECO:0007669"/>
    <property type="project" value="RHEA"/>
</dbReference>
<dbReference type="GO" id="GO:0009437">
    <property type="term" value="P:carnitine metabolic process"/>
    <property type="evidence" value="ECO:0007669"/>
    <property type="project" value="UniProtKB-UniRule"/>
</dbReference>
<dbReference type="FunFam" id="3.30.1540.10:FF:000001">
    <property type="entry name" value="L-carnitine CoA-transferase"/>
    <property type="match status" value="1"/>
</dbReference>
<dbReference type="Gene3D" id="3.40.50.10540">
    <property type="entry name" value="Crotonobetainyl-coa:carnitine coa-transferase, domain 1"/>
    <property type="match status" value="1"/>
</dbReference>
<dbReference type="Gene3D" id="3.30.1540.10">
    <property type="entry name" value="formyl-coa transferase, domain 3"/>
    <property type="match status" value="1"/>
</dbReference>
<dbReference type="HAMAP" id="MF_01050">
    <property type="entry name" value="CaiB"/>
    <property type="match status" value="1"/>
</dbReference>
<dbReference type="InterPro" id="IPR050509">
    <property type="entry name" value="CoA-transferase_III"/>
</dbReference>
<dbReference type="InterPro" id="IPR023452">
    <property type="entry name" value="CoA-Trfase_CaiB"/>
</dbReference>
<dbReference type="InterPro" id="IPR003673">
    <property type="entry name" value="CoA-Trfase_fam_III"/>
</dbReference>
<dbReference type="InterPro" id="IPR044855">
    <property type="entry name" value="CoA-Trfase_III_dom3_sf"/>
</dbReference>
<dbReference type="InterPro" id="IPR023606">
    <property type="entry name" value="CoA-Trfase_III_dom_1_sf"/>
</dbReference>
<dbReference type="NCBIfam" id="NF002914">
    <property type="entry name" value="PRK03525.1"/>
    <property type="match status" value="1"/>
</dbReference>
<dbReference type="PANTHER" id="PTHR48228:SF6">
    <property type="entry name" value="L-CARNITINE COA-TRANSFERASE"/>
    <property type="match status" value="1"/>
</dbReference>
<dbReference type="PANTHER" id="PTHR48228">
    <property type="entry name" value="SUCCINYL-COA--D-CITRAMALATE COA-TRANSFERASE"/>
    <property type="match status" value="1"/>
</dbReference>
<dbReference type="Pfam" id="PF02515">
    <property type="entry name" value="CoA_transf_3"/>
    <property type="match status" value="1"/>
</dbReference>
<dbReference type="SUPFAM" id="SSF89796">
    <property type="entry name" value="CoA-transferase family III (CaiB/BaiF)"/>
    <property type="match status" value="1"/>
</dbReference>